<proteinExistence type="inferred from homology"/>
<keyword id="KW-0963">Cytoplasm</keyword>
<keyword id="KW-0329">Glyoxylate bypass</keyword>
<keyword id="KW-0460">Magnesium</keyword>
<keyword id="KW-0479">Metal-binding</keyword>
<keyword id="KW-0558">Oxidation</keyword>
<keyword id="KW-1185">Reference proteome</keyword>
<keyword id="KW-0808">Transferase</keyword>
<keyword id="KW-0816">Tricarboxylic acid cycle</keyword>
<name>MASZ_AROAE</name>
<reference key="1">
    <citation type="journal article" date="2005" name="Arch. Microbiol.">
        <title>The genome sequence of an anaerobic aromatic-degrading denitrifying bacterium, strain EbN1.</title>
        <authorList>
            <person name="Rabus R."/>
            <person name="Kube M."/>
            <person name="Heider J."/>
            <person name="Beck A."/>
            <person name="Heitmann K."/>
            <person name="Widdel F."/>
            <person name="Reinhardt R."/>
        </authorList>
    </citation>
    <scope>NUCLEOTIDE SEQUENCE [LARGE SCALE GENOMIC DNA]</scope>
    <source>
        <strain>DSM 19018 / LMG 30748 / EbN1</strain>
    </source>
</reference>
<evidence type="ECO:0000255" key="1">
    <source>
        <dbReference type="HAMAP-Rule" id="MF_00641"/>
    </source>
</evidence>
<feature type="chain" id="PRO_1000056892" description="Malate synthase G">
    <location>
        <begin position="1"/>
        <end position="725"/>
    </location>
</feature>
<feature type="active site" description="Proton acceptor" evidence="1">
    <location>
        <position position="340"/>
    </location>
</feature>
<feature type="active site" description="Proton donor" evidence="1">
    <location>
        <position position="633"/>
    </location>
</feature>
<feature type="binding site" evidence="1">
    <location>
        <position position="118"/>
    </location>
    <ligand>
        <name>acetyl-CoA</name>
        <dbReference type="ChEBI" id="CHEBI:57288"/>
    </ligand>
</feature>
<feature type="binding site" evidence="1">
    <location>
        <begin position="125"/>
        <end position="126"/>
    </location>
    <ligand>
        <name>acetyl-CoA</name>
        <dbReference type="ChEBI" id="CHEBI:57288"/>
    </ligand>
</feature>
<feature type="binding site" evidence="1">
    <location>
        <position position="276"/>
    </location>
    <ligand>
        <name>acetyl-CoA</name>
        <dbReference type="ChEBI" id="CHEBI:57288"/>
    </ligand>
</feature>
<feature type="binding site" evidence="1">
    <location>
        <position position="313"/>
    </location>
    <ligand>
        <name>acetyl-CoA</name>
        <dbReference type="ChEBI" id="CHEBI:57288"/>
    </ligand>
</feature>
<feature type="binding site" evidence="1">
    <location>
        <position position="340"/>
    </location>
    <ligand>
        <name>glyoxylate</name>
        <dbReference type="ChEBI" id="CHEBI:36655"/>
    </ligand>
</feature>
<feature type="binding site" evidence="1">
    <location>
        <position position="429"/>
    </location>
    <ligand>
        <name>glyoxylate</name>
        <dbReference type="ChEBI" id="CHEBI:36655"/>
    </ligand>
</feature>
<feature type="binding site" evidence="1">
    <location>
        <position position="429"/>
    </location>
    <ligand>
        <name>Mg(2+)</name>
        <dbReference type="ChEBI" id="CHEBI:18420"/>
    </ligand>
</feature>
<feature type="binding site" evidence="1">
    <location>
        <begin position="454"/>
        <end position="457"/>
    </location>
    <ligand>
        <name>glyoxylate</name>
        <dbReference type="ChEBI" id="CHEBI:36655"/>
    </ligand>
</feature>
<feature type="binding site" evidence="1">
    <location>
        <position position="457"/>
    </location>
    <ligand>
        <name>Mg(2+)</name>
        <dbReference type="ChEBI" id="CHEBI:18420"/>
    </ligand>
</feature>
<feature type="binding site" evidence="1">
    <location>
        <position position="538"/>
    </location>
    <ligand>
        <name>acetyl-CoA</name>
        <dbReference type="ChEBI" id="CHEBI:57288"/>
    </ligand>
</feature>
<feature type="modified residue" description="Cysteine sulfenic acid (-SOH)" evidence="1">
    <location>
        <position position="619"/>
    </location>
</feature>
<accession>Q5P811</accession>
<sequence length="725" mass="78732">MTERIQCNQLQVDAALHRFIENEALPGTGLEAAAFWKGFSELANELAPKNRALLAERDRLQAEIDTWHRAHPGPIQDMPAYRAFLESIGYLQPVPAPFKITTANVDSEISEQAGPQLVVPIMNARYALNAANARWGSLYDALYGTNAIPSDGGAEAGSSYNPVRGARVIAFARNLLDQAAPLAQGSHDKTKAYAVAGGKLIVTLLDGSQTGLADPAKFAGFQGDAAAPSAVLLKNNGLHLEIQFDRKHPIGKTDAAGIKDVLVEAAVTTIMDCEDSTAAVDAEDKVVVYRSWLGLITGTLVETFDKGGKTVERKMNPDREYTAPNGSALRLHGRSLLFIRHVGHLMTNPAILLADGAEIPEGIMDGVVTTLISMRDLKLKRNSRTDSMYIVKPKMHGPAEVAFASELFGRVEQLLGLPADTMKVGIMDEERRTSVNLAGCIKAAESRVAFINTGFLDRTGDEMHTAMEAGPMIRKGDMKGSAWIQAYERQNVLVGLDCGLRGRAQIGKGMWAMPDLMAEMLEQKIGHPKAGATTAWVPSPTGATLHALHYHQVDVQSVQQEMEKISLAAERDTLLDNLLTVPVAASANWSATEIQQELDNNAQGILGYVVRWIDQGVGCSKVPDINNIGLMEDRATLRISSQHIANWLRHGVTNEAQVLETMKRMAAVVDQQNAGDPLYRPMAPDFDQSVAFQAAKDLVFKGCAQPSGYTEPLLHRWRQVAKARG</sequence>
<comment type="function">
    <text evidence="1">Involved in the glycolate utilization. Catalyzes the condensation and subsequent hydrolysis of acetyl-coenzyme A (acetyl-CoA) and glyoxylate to form malate and CoA.</text>
</comment>
<comment type="catalytic activity">
    <reaction evidence="1">
        <text>glyoxylate + acetyl-CoA + H2O = (S)-malate + CoA + H(+)</text>
        <dbReference type="Rhea" id="RHEA:18181"/>
        <dbReference type="ChEBI" id="CHEBI:15377"/>
        <dbReference type="ChEBI" id="CHEBI:15378"/>
        <dbReference type="ChEBI" id="CHEBI:15589"/>
        <dbReference type="ChEBI" id="CHEBI:36655"/>
        <dbReference type="ChEBI" id="CHEBI:57287"/>
        <dbReference type="ChEBI" id="CHEBI:57288"/>
        <dbReference type="EC" id="2.3.3.9"/>
    </reaction>
</comment>
<comment type="cofactor">
    <cofactor evidence="1">
        <name>Mg(2+)</name>
        <dbReference type="ChEBI" id="CHEBI:18420"/>
    </cofactor>
</comment>
<comment type="pathway">
    <text evidence="1">Carbohydrate metabolism; glyoxylate cycle; (S)-malate from isocitrate: step 2/2.</text>
</comment>
<comment type="subunit">
    <text evidence="1">Monomer.</text>
</comment>
<comment type="subcellular location">
    <subcellularLocation>
        <location evidence="1">Cytoplasm</location>
    </subcellularLocation>
</comment>
<comment type="similarity">
    <text evidence="1">Belongs to the malate synthase family. GlcB subfamily.</text>
</comment>
<protein>
    <recommendedName>
        <fullName evidence="1">Malate synthase G</fullName>
        <ecNumber evidence="1">2.3.3.9</ecNumber>
    </recommendedName>
</protein>
<dbReference type="EC" id="2.3.3.9" evidence="1"/>
<dbReference type="EMBL" id="CR555306">
    <property type="protein sequence ID" value="CAI06550.1"/>
    <property type="molecule type" value="Genomic_DNA"/>
</dbReference>
<dbReference type="RefSeq" id="WP_011236283.1">
    <property type="nucleotide sequence ID" value="NC_006513.1"/>
</dbReference>
<dbReference type="SMR" id="Q5P811"/>
<dbReference type="STRING" id="76114.ebA819"/>
<dbReference type="KEGG" id="eba:ebA819"/>
<dbReference type="eggNOG" id="COG2225">
    <property type="taxonomic scope" value="Bacteria"/>
</dbReference>
<dbReference type="HOGENOM" id="CLU_028446_1_0_4"/>
<dbReference type="OrthoDB" id="9762054at2"/>
<dbReference type="UniPathway" id="UPA00703">
    <property type="reaction ID" value="UER00720"/>
</dbReference>
<dbReference type="Proteomes" id="UP000006552">
    <property type="component" value="Chromosome"/>
</dbReference>
<dbReference type="GO" id="GO:0005829">
    <property type="term" value="C:cytosol"/>
    <property type="evidence" value="ECO:0007669"/>
    <property type="project" value="TreeGrafter"/>
</dbReference>
<dbReference type="GO" id="GO:0000287">
    <property type="term" value="F:magnesium ion binding"/>
    <property type="evidence" value="ECO:0007669"/>
    <property type="project" value="TreeGrafter"/>
</dbReference>
<dbReference type="GO" id="GO:0004474">
    <property type="term" value="F:malate synthase activity"/>
    <property type="evidence" value="ECO:0007669"/>
    <property type="project" value="UniProtKB-UniRule"/>
</dbReference>
<dbReference type="GO" id="GO:0009436">
    <property type="term" value="P:glyoxylate catabolic process"/>
    <property type="evidence" value="ECO:0007669"/>
    <property type="project" value="TreeGrafter"/>
</dbReference>
<dbReference type="GO" id="GO:0006097">
    <property type="term" value="P:glyoxylate cycle"/>
    <property type="evidence" value="ECO:0007669"/>
    <property type="project" value="UniProtKB-UniRule"/>
</dbReference>
<dbReference type="GO" id="GO:0006099">
    <property type="term" value="P:tricarboxylic acid cycle"/>
    <property type="evidence" value="ECO:0007669"/>
    <property type="project" value="UniProtKB-KW"/>
</dbReference>
<dbReference type="CDD" id="cd00728">
    <property type="entry name" value="malate_synt_G"/>
    <property type="match status" value="1"/>
</dbReference>
<dbReference type="FunFam" id="3.20.20.360:FF:000003">
    <property type="entry name" value="Malate synthase G"/>
    <property type="match status" value="1"/>
</dbReference>
<dbReference type="Gene3D" id="3.20.20.360">
    <property type="entry name" value="Malate synthase, domain 3"/>
    <property type="match status" value="2"/>
</dbReference>
<dbReference type="Gene3D" id="1.20.1220.12">
    <property type="entry name" value="Malate synthase, domain III"/>
    <property type="match status" value="1"/>
</dbReference>
<dbReference type="HAMAP" id="MF_00641">
    <property type="entry name" value="Malate_synth_G"/>
    <property type="match status" value="1"/>
</dbReference>
<dbReference type="InterPro" id="IPR044856">
    <property type="entry name" value="Malate_synth_C_sf"/>
</dbReference>
<dbReference type="InterPro" id="IPR011076">
    <property type="entry name" value="Malate_synth_sf"/>
</dbReference>
<dbReference type="InterPro" id="IPR001465">
    <property type="entry name" value="Malate_synthase_TIM"/>
</dbReference>
<dbReference type="InterPro" id="IPR006253">
    <property type="entry name" value="Malate_synthG"/>
</dbReference>
<dbReference type="InterPro" id="IPR048355">
    <property type="entry name" value="MS_C"/>
</dbReference>
<dbReference type="InterPro" id="IPR048356">
    <property type="entry name" value="MS_N"/>
</dbReference>
<dbReference type="InterPro" id="IPR046363">
    <property type="entry name" value="MS_N_TIM-barrel_dom"/>
</dbReference>
<dbReference type="InterPro" id="IPR048357">
    <property type="entry name" value="MSG_insertion"/>
</dbReference>
<dbReference type="NCBIfam" id="TIGR01345">
    <property type="entry name" value="malate_syn_G"/>
    <property type="match status" value="1"/>
</dbReference>
<dbReference type="NCBIfam" id="NF002825">
    <property type="entry name" value="PRK02999.1"/>
    <property type="match status" value="1"/>
</dbReference>
<dbReference type="PANTHER" id="PTHR42739">
    <property type="entry name" value="MALATE SYNTHASE G"/>
    <property type="match status" value="1"/>
</dbReference>
<dbReference type="PANTHER" id="PTHR42739:SF1">
    <property type="entry name" value="MALATE SYNTHASE G"/>
    <property type="match status" value="1"/>
</dbReference>
<dbReference type="Pfam" id="PF20659">
    <property type="entry name" value="MS_C"/>
    <property type="match status" value="1"/>
</dbReference>
<dbReference type="Pfam" id="PF20656">
    <property type="entry name" value="MS_N"/>
    <property type="match status" value="1"/>
</dbReference>
<dbReference type="Pfam" id="PF01274">
    <property type="entry name" value="MS_TIM-barrel"/>
    <property type="match status" value="1"/>
</dbReference>
<dbReference type="Pfam" id="PF20658">
    <property type="entry name" value="MSG_insertion"/>
    <property type="match status" value="1"/>
</dbReference>
<dbReference type="SUPFAM" id="SSF51645">
    <property type="entry name" value="Malate synthase G"/>
    <property type="match status" value="1"/>
</dbReference>
<organism>
    <name type="scientific">Aromatoleum aromaticum (strain DSM 19018 / LMG 30748 / EbN1)</name>
    <name type="common">Azoarcus sp. (strain EbN1)</name>
    <dbReference type="NCBI Taxonomy" id="76114"/>
    <lineage>
        <taxon>Bacteria</taxon>
        <taxon>Pseudomonadati</taxon>
        <taxon>Pseudomonadota</taxon>
        <taxon>Betaproteobacteria</taxon>
        <taxon>Rhodocyclales</taxon>
        <taxon>Rhodocyclaceae</taxon>
        <taxon>Aromatoleum</taxon>
    </lineage>
</organism>
<gene>
    <name evidence="1" type="primary">glcB</name>
    <name type="ordered locus">AZOSEA04280</name>
    <name type="ORF">ebA819</name>
</gene>